<protein>
    <recommendedName>
        <fullName evidence="1">Aspartyl/glutamyl-tRNA(Asn/Gln) amidotransferase subunit B</fullName>
        <shortName evidence="1">Asp/Glu-ADT subunit B</shortName>
        <ecNumber evidence="1">6.3.5.-</ecNumber>
    </recommendedName>
</protein>
<evidence type="ECO:0000255" key="1">
    <source>
        <dbReference type="HAMAP-Rule" id="MF_00121"/>
    </source>
</evidence>
<name>GATB_RUMCH</name>
<dbReference type="EC" id="6.3.5.-" evidence="1"/>
<dbReference type="EMBL" id="CP001348">
    <property type="protein sequence ID" value="ACL76767.1"/>
    <property type="molecule type" value="Genomic_DNA"/>
</dbReference>
<dbReference type="RefSeq" id="WP_015925856.1">
    <property type="nucleotide sequence ID" value="NC_011898.1"/>
</dbReference>
<dbReference type="SMR" id="B8I602"/>
<dbReference type="STRING" id="394503.Ccel_2437"/>
<dbReference type="KEGG" id="cce:Ccel_2437"/>
<dbReference type="eggNOG" id="COG0064">
    <property type="taxonomic scope" value="Bacteria"/>
</dbReference>
<dbReference type="HOGENOM" id="CLU_019240_0_1_9"/>
<dbReference type="OrthoDB" id="9804078at2"/>
<dbReference type="Proteomes" id="UP000001349">
    <property type="component" value="Chromosome"/>
</dbReference>
<dbReference type="GO" id="GO:0050566">
    <property type="term" value="F:asparaginyl-tRNA synthase (glutamine-hydrolyzing) activity"/>
    <property type="evidence" value="ECO:0007669"/>
    <property type="project" value="RHEA"/>
</dbReference>
<dbReference type="GO" id="GO:0005524">
    <property type="term" value="F:ATP binding"/>
    <property type="evidence" value="ECO:0007669"/>
    <property type="project" value="UniProtKB-KW"/>
</dbReference>
<dbReference type="GO" id="GO:0050567">
    <property type="term" value="F:glutaminyl-tRNA synthase (glutamine-hydrolyzing) activity"/>
    <property type="evidence" value="ECO:0007669"/>
    <property type="project" value="UniProtKB-UniRule"/>
</dbReference>
<dbReference type="GO" id="GO:0006412">
    <property type="term" value="P:translation"/>
    <property type="evidence" value="ECO:0007669"/>
    <property type="project" value="UniProtKB-UniRule"/>
</dbReference>
<dbReference type="FunFam" id="1.10.10.410:FF:000001">
    <property type="entry name" value="Aspartyl/glutamyl-tRNA(Asn/Gln) amidotransferase subunit B"/>
    <property type="match status" value="1"/>
</dbReference>
<dbReference type="Gene3D" id="1.10.10.410">
    <property type="match status" value="1"/>
</dbReference>
<dbReference type="Gene3D" id="1.10.150.380">
    <property type="entry name" value="GatB domain, N-terminal subdomain"/>
    <property type="match status" value="1"/>
</dbReference>
<dbReference type="HAMAP" id="MF_00121">
    <property type="entry name" value="GatB"/>
    <property type="match status" value="1"/>
</dbReference>
<dbReference type="InterPro" id="IPR017959">
    <property type="entry name" value="Asn/Gln-tRNA_amidoTrfase_suB/E"/>
</dbReference>
<dbReference type="InterPro" id="IPR006075">
    <property type="entry name" value="Asn/Gln-tRNA_Trfase_suB/E_cat"/>
</dbReference>
<dbReference type="InterPro" id="IPR018027">
    <property type="entry name" value="Asn/Gln_amidotransferase"/>
</dbReference>
<dbReference type="InterPro" id="IPR003789">
    <property type="entry name" value="Asn/Gln_tRNA_amidoTrase-B-like"/>
</dbReference>
<dbReference type="InterPro" id="IPR004413">
    <property type="entry name" value="GatB"/>
</dbReference>
<dbReference type="InterPro" id="IPR042114">
    <property type="entry name" value="GatB_C_1"/>
</dbReference>
<dbReference type="InterPro" id="IPR023168">
    <property type="entry name" value="GatB_Yqey_C_2"/>
</dbReference>
<dbReference type="InterPro" id="IPR017958">
    <property type="entry name" value="Gln-tRNA_amidoTrfase_suB_CS"/>
</dbReference>
<dbReference type="InterPro" id="IPR014746">
    <property type="entry name" value="Gln_synth/guanido_kin_cat_dom"/>
</dbReference>
<dbReference type="NCBIfam" id="TIGR00133">
    <property type="entry name" value="gatB"/>
    <property type="match status" value="1"/>
</dbReference>
<dbReference type="NCBIfam" id="NF004012">
    <property type="entry name" value="PRK05477.1-2"/>
    <property type="match status" value="1"/>
</dbReference>
<dbReference type="NCBIfam" id="NF004014">
    <property type="entry name" value="PRK05477.1-4"/>
    <property type="match status" value="1"/>
</dbReference>
<dbReference type="PANTHER" id="PTHR11659:SF4">
    <property type="entry name" value="ASPARTYL_GLUTAMYL-TRNA(GLN) AMIDOTRANSFERASE SUBUNIT B_E CATALYTIC DOMAIN-CONTAINING PROTEIN"/>
    <property type="match status" value="1"/>
</dbReference>
<dbReference type="PANTHER" id="PTHR11659">
    <property type="entry name" value="GLUTAMYL-TRNA GLN AMIDOTRANSFERASE SUBUNIT B MITOCHONDRIAL AND PROKARYOTIC PET112-RELATED"/>
    <property type="match status" value="1"/>
</dbReference>
<dbReference type="Pfam" id="PF02934">
    <property type="entry name" value="GatB_N"/>
    <property type="match status" value="1"/>
</dbReference>
<dbReference type="Pfam" id="PF02637">
    <property type="entry name" value="GatB_Yqey"/>
    <property type="match status" value="1"/>
</dbReference>
<dbReference type="SMART" id="SM00845">
    <property type="entry name" value="GatB_Yqey"/>
    <property type="match status" value="1"/>
</dbReference>
<dbReference type="SUPFAM" id="SSF89095">
    <property type="entry name" value="GatB/YqeY motif"/>
    <property type="match status" value="1"/>
</dbReference>
<dbReference type="SUPFAM" id="SSF55931">
    <property type="entry name" value="Glutamine synthetase/guanido kinase"/>
    <property type="match status" value="1"/>
</dbReference>
<dbReference type="PROSITE" id="PS01234">
    <property type="entry name" value="GATB"/>
    <property type="match status" value="1"/>
</dbReference>
<feature type="chain" id="PRO_1000122516" description="Aspartyl/glutamyl-tRNA(Asn/Gln) amidotransferase subunit B">
    <location>
        <begin position="1"/>
        <end position="485"/>
    </location>
</feature>
<reference key="1">
    <citation type="submission" date="2009-01" db="EMBL/GenBank/DDBJ databases">
        <title>Complete sequence of Clostridium cellulolyticum H10.</title>
        <authorList>
            <consortium name="US DOE Joint Genome Institute"/>
            <person name="Lucas S."/>
            <person name="Copeland A."/>
            <person name="Lapidus A."/>
            <person name="Glavina del Rio T."/>
            <person name="Dalin E."/>
            <person name="Tice H."/>
            <person name="Bruce D."/>
            <person name="Goodwin L."/>
            <person name="Pitluck S."/>
            <person name="Chertkov O."/>
            <person name="Saunders E."/>
            <person name="Brettin T."/>
            <person name="Detter J.C."/>
            <person name="Han C."/>
            <person name="Larimer F."/>
            <person name="Land M."/>
            <person name="Hauser L."/>
            <person name="Kyrpides N."/>
            <person name="Ivanova N."/>
            <person name="Zhou J."/>
            <person name="Richardson P."/>
        </authorList>
    </citation>
    <scope>NUCLEOTIDE SEQUENCE [LARGE SCALE GENOMIC DNA]</scope>
    <source>
        <strain>ATCC 35319 / DSM 5812 / JCM 6584 / H10</strain>
    </source>
</reference>
<comment type="function">
    <text evidence="1">Allows the formation of correctly charged Asn-tRNA(Asn) or Gln-tRNA(Gln) through the transamidation of misacylated Asp-tRNA(Asn) or Glu-tRNA(Gln) in organisms which lack either or both of asparaginyl-tRNA or glutaminyl-tRNA synthetases. The reaction takes place in the presence of glutamine and ATP through an activated phospho-Asp-tRNA(Asn) or phospho-Glu-tRNA(Gln).</text>
</comment>
<comment type="catalytic activity">
    <reaction evidence="1">
        <text>L-glutamyl-tRNA(Gln) + L-glutamine + ATP + H2O = L-glutaminyl-tRNA(Gln) + L-glutamate + ADP + phosphate + H(+)</text>
        <dbReference type="Rhea" id="RHEA:17521"/>
        <dbReference type="Rhea" id="RHEA-COMP:9681"/>
        <dbReference type="Rhea" id="RHEA-COMP:9684"/>
        <dbReference type="ChEBI" id="CHEBI:15377"/>
        <dbReference type="ChEBI" id="CHEBI:15378"/>
        <dbReference type="ChEBI" id="CHEBI:29985"/>
        <dbReference type="ChEBI" id="CHEBI:30616"/>
        <dbReference type="ChEBI" id="CHEBI:43474"/>
        <dbReference type="ChEBI" id="CHEBI:58359"/>
        <dbReference type="ChEBI" id="CHEBI:78520"/>
        <dbReference type="ChEBI" id="CHEBI:78521"/>
        <dbReference type="ChEBI" id="CHEBI:456216"/>
    </reaction>
</comment>
<comment type="catalytic activity">
    <reaction evidence="1">
        <text>L-aspartyl-tRNA(Asn) + L-glutamine + ATP + H2O = L-asparaginyl-tRNA(Asn) + L-glutamate + ADP + phosphate + 2 H(+)</text>
        <dbReference type="Rhea" id="RHEA:14513"/>
        <dbReference type="Rhea" id="RHEA-COMP:9674"/>
        <dbReference type="Rhea" id="RHEA-COMP:9677"/>
        <dbReference type="ChEBI" id="CHEBI:15377"/>
        <dbReference type="ChEBI" id="CHEBI:15378"/>
        <dbReference type="ChEBI" id="CHEBI:29985"/>
        <dbReference type="ChEBI" id="CHEBI:30616"/>
        <dbReference type="ChEBI" id="CHEBI:43474"/>
        <dbReference type="ChEBI" id="CHEBI:58359"/>
        <dbReference type="ChEBI" id="CHEBI:78515"/>
        <dbReference type="ChEBI" id="CHEBI:78516"/>
        <dbReference type="ChEBI" id="CHEBI:456216"/>
    </reaction>
</comment>
<comment type="subunit">
    <text evidence="1">Heterotrimer of A, B and C subunits.</text>
</comment>
<comment type="similarity">
    <text evidence="1">Belongs to the GatB/GatE family. GatB subfamily.</text>
</comment>
<sequence length="485" mass="54783">MKYIPSIGLEIHSELSTKSKIFCDCPVSFGGEPNTRCCPVCTGMPGTLPVLNKQAVEYTVIAGLALNCKINEFSKMDRKNYFYPDLPKAYQISQFDLPICKDGGLTINTPDGEKFIRIERIHLEEDAGKLLHDNYDRYSLADYNRCGVPLIEIVTKPDLSSAEEAKEFVEKVRLMLLYSGVSDCRMEEGSLRADVNVSIRPIGTDELGTRTEMKNINSIKAIARAIDYEINRQSELLNEGKKIIQETRRWDDSKGESKALRSKEDAHDYRYFPEPDIVPVTFKSEDIEKLRKSLPELPDKRFERYTKTYSVNQADANLLLTSVSLSDFFEAAAAESGNPKQAANFIVVEVLRRLKDSNMSPEDIPFDGKLLARLLRLMDSEKITPNNAKKVLSEMFETGKEPDTIVDERGYKIINDTAEVESMVKEIISSNEKAVGEYLEGKEKTFGYLMGQCSRALAGRGNPKVVQEILRSELNKLRDIDINVH</sequence>
<proteinExistence type="inferred from homology"/>
<accession>B8I602</accession>
<organism>
    <name type="scientific">Ruminiclostridium cellulolyticum (strain ATCC 35319 / DSM 5812 / JCM 6584 / H10)</name>
    <name type="common">Clostridium cellulolyticum</name>
    <dbReference type="NCBI Taxonomy" id="394503"/>
    <lineage>
        <taxon>Bacteria</taxon>
        <taxon>Bacillati</taxon>
        <taxon>Bacillota</taxon>
        <taxon>Clostridia</taxon>
        <taxon>Eubacteriales</taxon>
        <taxon>Oscillospiraceae</taxon>
        <taxon>Ruminiclostridium</taxon>
    </lineage>
</organism>
<keyword id="KW-0067">ATP-binding</keyword>
<keyword id="KW-0436">Ligase</keyword>
<keyword id="KW-0547">Nucleotide-binding</keyword>
<keyword id="KW-0648">Protein biosynthesis</keyword>
<keyword id="KW-1185">Reference proteome</keyword>
<gene>
    <name evidence="1" type="primary">gatB</name>
    <name type="ordered locus">Ccel_2437</name>
</gene>